<name>SECA_KLEP7</name>
<organism>
    <name type="scientific">Klebsiella pneumoniae subsp. pneumoniae (strain ATCC 700721 / MGH 78578)</name>
    <dbReference type="NCBI Taxonomy" id="272620"/>
    <lineage>
        <taxon>Bacteria</taxon>
        <taxon>Pseudomonadati</taxon>
        <taxon>Pseudomonadota</taxon>
        <taxon>Gammaproteobacteria</taxon>
        <taxon>Enterobacterales</taxon>
        <taxon>Enterobacteriaceae</taxon>
        <taxon>Klebsiella/Raoultella group</taxon>
        <taxon>Klebsiella</taxon>
        <taxon>Klebsiella pneumoniae complex</taxon>
    </lineage>
</organism>
<protein>
    <recommendedName>
        <fullName evidence="1">Protein translocase subunit SecA</fullName>
        <ecNumber evidence="1">7.4.2.8</ecNumber>
    </recommendedName>
</protein>
<gene>
    <name evidence="1" type="primary">secA</name>
    <name type="ordered locus">KPN78578_01010</name>
    <name type="ORF">KPN_00102</name>
</gene>
<feature type="chain" id="PRO_0000320834" description="Protein translocase subunit SecA">
    <location>
        <begin position="1"/>
        <end position="901"/>
    </location>
</feature>
<feature type="region of interest" description="Disordered" evidence="2">
    <location>
        <begin position="852"/>
        <end position="901"/>
    </location>
</feature>
<feature type="compositionally biased region" description="Basic residues" evidence="2">
    <location>
        <begin position="891"/>
        <end position="901"/>
    </location>
</feature>
<feature type="binding site" evidence="1">
    <location>
        <position position="87"/>
    </location>
    <ligand>
        <name>ATP</name>
        <dbReference type="ChEBI" id="CHEBI:30616"/>
    </ligand>
</feature>
<feature type="binding site" evidence="1">
    <location>
        <begin position="105"/>
        <end position="109"/>
    </location>
    <ligand>
        <name>ATP</name>
        <dbReference type="ChEBI" id="CHEBI:30616"/>
    </ligand>
</feature>
<feature type="binding site" evidence="1">
    <location>
        <position position="512"/>
    </location>
    <ligand>
        <name>ATP</name>
        <dbReference type="ChEBI" id="CHEBI:30616"/>
    </ligand>
</feature>
<feature type="binding site" evidence="1">
    <location>
        <position position="885"/>
    </location>
    <ligand>
        <name>Zn(2+)</name>
        <dbReference type="ChEBI" id="CHEBI:29105"/>
    </ligand>
</feature>
<feature type="binding site" evidence="1">
    <location>
        <position position="887"/>
    </location>
    <ligand>
        <name>Zn(2+)</name>
        <dbReference type="ChEBI" id="CHEBI:29105"/>
    </ligand>
</feature>
<feature type="binding site" evidence="1">
    <location>
        <position position="896"/>
    </location>
    <ligand>
        <name>Zn(2+)</name>
        <dbReference type="ChEBI" id="CHEBI:29105"/>
    </ligand>
</feature>
<feature type="binding site" evidence="1">
    <location>
        <position position="897"/>
    </location>
    <ligand>
        <name>Zn(2+)</name>
        <dbReference type="ChEBI" id="CHEBI:29105"/>
    </ligand>
</feature>
<dbReference type="EC" id="7.4.2.8" evidence="1"/>
<dbReference type="EMBL" id="CP000647">
    <property type="protein sequence ID" value="ABR75562.1"/>
    <property type="molecule type" value="Genomic_DNA"/>
</dbReference>
<dbReference type="RefSeq" id="WP_002888638.1">
    <property type="nucleotide sequence ID" value="NC_009648.1"/>
</dbReference>
<dbReference type="SMR" id="A6T4P1"/>
<dbReference type="STRING" id="272620.KPN_00102"/>
<dbReference type="jPOST" id="A6T4P1"/>
<dbReference type="PaxDb" id="272620-KPN_00102"/>
<dbReference type="EnsemblBacteria" id="ABR75562">
    <property type="protein sequence ID" value="ABR75562"/>
    <property type="gene ID" value="KPN_00102"/>
</dbReference>
<dbReference type="KEGG" id="kpn:KPN_00102"/>
<dbReference type="HOGENOM" id="CLU_005314_3_0_6"/>
<dbReference type="Proteomes" id="UP000000265">
    <property type="component" value="Chromosome"/>
</dbReference>
<dbReference type="GO" id="GO:0031522">
    <property type="term" value="C:cell envelope Sec protein transport complex"/>
    <property type="evidence" value="ECO:0007669"/>
    <property type="project" value="TreeGrafter"/>
</dbReference>
<dbReference type="GO" id="GO:0005829">
    <property type="term" value="C:cytosol"/>
    <property type="evidence" value="ECO:0007669"/>
    <property type="project" value="TreeGrafter"/>
</dbReference>
<dbReference type="GO" id="GO:0005886">
    <property type="term" value="C:plasma membrane"/>
    <property type="evidence" value="ECO:0007669"/>
    <property type="project" value="UniProtKB-SubCell"/>
</dbReference>
<dbReference type="GO" id="GO:0005524">
    <property type="term" value="F:ATP binding"/>
    <property type="evidence" value="ECO:0007669"/>
    <property type="project" value="UniProtKB-UniRule"/>
</dbReference>
<dbReference type="GO" id="GO:0046872">
    <property type="term" value="F:metal ion binding"/>
    <property type="evidence" value="ECO:0007669"/>
    <property type="project" value="UniProtKB-KW"/>
</dbReference>
<dbReference type="GO" id="GO:0008564">
    <property type="term" value="F:protein-exporting ATPase activity"/>
    <property type="evidence" value="ECO:0007669"/>
    <property type="project" value="UniProtKB-EC"/>
</dbReference>
<dbReference type="GO" id="GO:0065002">
    <property type="term" value="P:intracellular protein transmembrane transport"/>
    <property type="evidence" value="ECO:0007669"/>
    <property type="project" value="UniProtKB-UniRule"/>
</dbReference>
<dbReference type="GO" id="GO:0017038">
    <property type="term" value="P:protein import"/>
    <property type="evidence" value="ECO:0007669"/>
    <property type="project" value="InterPro"/>
</dbReference>
<dbReference type="GO" id="GO:0006605">
    <property type="term" value="P:protein targeting"/>
    <property type="evidence" value="ECO:0007669"/>
    <property type="project" value="UniProtKB-UniRule"/>
</dbReference>
<dbReference type="GO" id="GO:0043952">
    <property type="term" value="P:protein transport by the Sec complex"/>
    <property type="evidence" value="ECO:0007669"/>
    <property type="project" value="TreeGrafter"/>
</dbReference>
<dbReference type="CDD" id="cd17928">
    <property type="entry name" value="DEXDc_SecA"/>
    <property type="match status" value="1"/>
</dbReference>
<dbReference type="CDD" id="cd18803">
    <property type="entry name" value="SF2_C_secA"/>
    <property type="match status" value="1"/>
</dbReference>
<dbReference type="FunFam" id="1.10.3060.10:FF:000001">
    <property type="entry name" value="Preprotein translocase subunit SecA"/>
    <property type="match status" value="1"/>
</dbReference>
<dbReference type="FunFam" id="3.40.50.300:FF:000081">
    <property type="entry name" value="Preprotein translocase subunit SecA"/>
    <property type="match status" value="1"/>
</dbReference>
<dbReference type="FunFam" id="3.40.50.300:FF:000113">
    <property type="entry name" value="Preprotein translocase subunit SecA"/>
    <property type="match status" value="1"/>
</dbReference>
<dbReference type="FunFam" id="3.90.1440.10:FF:000001">
    <property type="entry name" value="Preprotein translocase subunit SecA"/>
    <property type="match status" value="1"/>
</dbReference>
<dbReference type="Gene3D" id="1.10.3060.10">
    <property type="entry name" value="Helical scaffold and wing domains of SecA"/>
    <property type="match status" value="1"/>
</dbReference>
<dbReference type="Gene3D" id="3.40.50.300">
    <property type="entry name" value="P-loop containing nucleotide triphosphate hydrolases"/>
    <property type="match status" value="2"/>
</dbReference>
<dbReference type="Gene3D" id="3.90.1440.10">
    <property type="entry name" value="SecA, preprotein cross-linking domain"/>
    <property type="match status" value="1"/>
</dbReference>
<dbReference type="HAMAP" id="MF_01382">
    <property type="entry name" value="SecA"/>
    <property type="match status" value="1"/>
</dbReference>
<dbReference type="InterPro" id="IPR014001">
    <property type="entry name" value="Helicase_ATP-bd"/>
</dbReference>
<dbReference type="InterPro" id="IPR001650">
    <property type="entry name" value="Helicase_C-like"/>
</dbReference>
<dbReference type="InterPro" id="IPR027417">
    <property type="entry name" value="P-loop_NTPase"/>
</dbReference>
<dbReference type="InterPro" id="IPR004027">
    <property type="entry name" value="SEC_C_motif"/>
</dbReference>
<dbReference type="InterPro" id="IPR000185">
    <property type="entry name" value="SecA"/>
</dbReference>
<dbReference type="InterPro" id="IPR020937">
    <property type="entry name" value="SecA_CS"/>
</dbReference>
<dbReference type="InterPro" id="IPR011115">
    <property type="entry name" value="SecA_DEAD"/>
</dbReference>
<dbReference type="InterPro" id="IPR014018">
    <property type="entry name" value="SecA_motor_DEAD"/>
</dbReference>
<dbReference type="InterPro" id="IPR011130">
    <property type="entry name" value="SecA_preprotein_X-link_dom"/>
</dbReference>
<dbReference type="InterPro" id="IPR044722">
    <property type="entry name" value="SecA_SF2_C"/>
</dbReference>
<dbReference type="InterPro" id="IPR011116">
    <property type="entry name" value="SecA_Wing/Scaffold"/>
</dbReference>
<dbReference type="InterPro" id="IPR036266">
    <property type="entry name" value="SecA_Wing/Scaffold_sf"/>
</dbReference>
<dbReference type="InterPro" id="IPR036670">
    <property type="entry name" value="SecA_X-link_sf"/>
</dbReference>
<dbReference type="NCBIfam" id="NF009538">
    <property type="entry name" value="PRK12904.1"/>
    <property type="match status" value="1"/>
</dbReference>
<dbReference type="NCBIfam" id="TIGR00963">
    <property type="entry name" value="secA"/>
    <property type="match status" value="1"/>
</dbReference>
<dbReference type="PANTHER" id="PTHR30612:SF0">
    <property type="entry name" value="CHLOROPLAST PROTEIN-TRANSPORTING ATPASE"/>
    <property type="match status" value="1"/>
</dbReference>
<dbReference type="PANTHER" id="PTHR30612">
    <property type="entry name" value="SECA INNER MEMBRANE COMPONENT OF SEC PROTEIN SECRETION SYSTEM"/>
    <property type="match status" value="1"/>
</dbReference>
<dbReference type="Pfam" id="PF21090">
    <property type="entry name" value="P-loop_SecA"/>
    <property type="match status" value="1"/>
</dbReference>
<dbReference type="Pfam" id="PF02810">
    <property type="entry name" value="SEC-C"/>
    <property type="match status" value="1"/>
</dbReference>
<dbReference type="Pfam" id="PF07517">
    <property type="entry name" value="SecA_DEAD"/>
    <property type="match status" value="1"/>
</dbReference>
<dbReference type="Pfam" id="PF01043">
    <property type="entry name" value="SecA_PP_bind"/>
    <property type="match status" value="1"/>
</dbReference>
<dbReference type="Pfam" id="PF07516">
    <property type="entry name" value="SecA_SW"/>
    <property type="match status" value="1"/>
</dbReference>
<dbReference type="PRINTS" id="PR00906">
    <property type="entry name" value="SECA"/>
</dbReference>
<dbReference type="SMART" id="SM00957">
    <property type="entry name" value="SecA_DEAD"/>
    <property type="match status" value="1"/>
</dbReference>
<dbReference type="SMART" id="SM00958">
    <property type="entry name" value="SecA_PP_bind"/>
    <property type="match status" value="1"/>
</dbReference>
<dbReference type="SUPFAM" id="SSF81886">
    <property type="entry name" value="Helical scaffold and wing domains of SecA"/>
    <property type="match status" value="1"/>
</dbReference>
<dbReference type="SUPFAM" id="SSF52540">
    <property type="entry name" value="P-loop containing nucleoside triphosphate hydrolases"/>
    <property type="match status" value="2"/>
</dbReference>
<dbReference type="SUPFAM" id="SSF81767">
    <property type="entry name" value="Pre-protein crosslinking domain of SecA"/>
    <property type="match status" value="1"/>
</dbReference>
<dbReference type="PROSITE" id="PS01312">
    <property type="entry name" value="SECA"/>
    <property type="match status" value="1"/>
</dbReference>
<dbReference type="PROSITE" id="PS51196">
    <property type="entry name" value="SECA_MOTOR_DEAD"/>
    <property type="match status" value="1"/>
</dbReference>
<evidence type="ECO:0000255" key="1">
    <source>
        <dbReference type="HAMAP-Rule" id="MF_01382"/>
    </source>
</evidence>
<evidence type="ECO:0000256" key="2">
    <source>
        <dbReference type="SAM" id="MobiDB-lite"/>
    </source>
</evidence>
<keyword id="KW-0067">ATP-binding</keyword>
<keyword id="KW-0997">Cell inner membrane</keyword>
<keyword id="KW-1003">Cell membrane</keyword>
<keyword id="KW-0963">Cytoplasm</keyword>
<keyword id="KW-0472">Membrane</keyword>
<keyword id="KW-0479">Metal-binding</keyword>
<keyword id="KW-0547">Nucleotide-binding</keyword>
<keyword id="KW-0653">Protein transport</keyword>
<keyword id="KW-1278">Translocase</keyword>
<keyword id="KW-0811">Translocation</keyword>
<keyword id="KW-0813">Transport</keyword>
<keyword id="KW-0862">Zinc</keyword>
<proteinExistence type="inferred from homology"/>
<accession>A6T4P1</accession>
<comment type="function">
    <text evidence="1">Part of the Sec protein translocase complex. Interacts with the SecYEG preprotein conducting channel. Has a central role in coupling the hydrolysis of ATP to the transfer of proteins into and across the cell membrane, serving both as a receptor for the preprotein-SecB complex and as an ATP-driven molecular motor driving the stepwise translocation of polypeptide chains across the membrane.</text>
</comment>
<comment type="catalytic activity">
    <reaction evidence="1">
        <text>ATP + H2O + cellular proteinSide 1 = ADP + phosphate + cellular proteinSide 2.</text>
        <dbReference type="EC" id="7.4.2.8"/>
    </reaction>
</comment>
<comment type="cofactor">
    <cofactor evidence="1">
        <name>Zn(2+)</name>
        <dbReference type="ChEBI" id="CHEBI:29105"/>
    </cofactor>
    <text evidence="1">May bind 1 zinc ion per subunit.</text>
</comment>
<comment type="subunit">
    <text evidence="1">Monomer and homodimer. Part of the essential Sec protein translocation apparatus which comprises SecA, SecYEG and auxiliary proteins SecDF-YajC and YidC.</text>
</comment>
<comment type="subcellular location">
    <subcellularLocation>
        <location evidence="1">Cell inner membrane</location>
        <topology evidence="1">Peripheral membrane protein</topology>
        <orientation evidence="1">Cytoplasmic side</orientation>
    </subcellularLocation>
    <subcellularLocation>
        <location evidence="1">Cytoplasm</location>
    </subcellularLocation>
    <text evidence="1">Distribution is 50-50.</text>
</comment>
<comment type="induction">
    <text evidence="1">Repressed under conditions of excess protein secretion capacity and derepressed when protein secretion becomes limiting. This is regulated by SecM.</text>
</comment>
<comment type="similarity">
    <text evidence="1">Belongs to the SecA family.</text>
</comment>
<sequence>MLIKMLTKVFGSRNDRTLRRMRKVVNIINGMEPAMEKLSDDELKAKTAEFRARLEKGETLESLIPEAFAVVREASKRVFGMRHFDVQLLGGMVLNDRCIAEMRTGEGKTLTATLPAYLNALTGKGVHVVTVNDYLAQRDAENNRPLFEFLGMTVGINMSGLPAPAKREAYAADITYGTNNEYGFDYLRDNMAFSPEERVQRKLHYALVDEVDSILIDEARTPLIISGPAEDSSEMYRKVNKIIPHLIRQEKEDSDTFTGEGHFSVDEKARQVNLTERGLVLIEELLVQEGIMDEGESLYSPTNIMLMHHVTAALRAHALFTRDVDYIVKDGEVIIVDEHTGRTMQGRRWSDGLHQAVEAKEGVEIQNENQTLASITFQNYFRLYEKLAGMTGTADTEAFEFSSIYKLDTVVVPTNRPMIRKDMADLVYMTEAEKIQAIIEDIKTRTAAGQPVLVGTISIEKSEVVSRELTKAGIKHNVLNAKFHASEADIVAQAGYPSAVTIATNMAGRGTDIMLGGSWQAEVAALENPTPEQIEKIKADWQVRHDAVLAAGGLHIIGTERHESRRIDNQLRGRAGRQGDAGSSRFYLSMEDALMRIFASDRVSGMMRKLGMKPGEAIEHPWVTKAIANAQRKVESRNFDIRKQLLEYDDVANDQRRAIYTQRNELLDVSDVSETINSIREDVFKATIDAHIPPQSLEEMWDIEGLQERLKNDFDLDLPIKEWLDKEPELHEETLRERILQSAVETYQRKEEVVGAEMMRHFEKGVMLQTLDSLWKEHLAAMDYLRQGIHLRGYAQKDPKQEYKRESFSMFAAMLESLKYEVISTLSKVQVRMPEEVEAMEQQRREEAERLAQMQQLSHQSDDEAAAQDLAAQTGERKVGRNDPCPCGSGKKYKQCHGRLS</sequence>
<reference key="1">
    <citation type="submission" date="2006-09" db="EMBL/GenBank/DDBJ databases">
        <authorList>
            <consortium name="The Klebsiella pneumonia Genome Sequencing Project"/>
            <person name="McClelland M."/>
            <person name="Sanderson E.K."/>
            <person name="Spieth J."/>
            <person name="Clifton W.S."/>
            <person name="Latreille P."/>
            <person name="Sabo A."/>
            <person name="Pepin K."/>
            <person name="Bhonagiri V."/>
            <person name="Porwollik S."/>
            <person name="Ali J."/>
            <person name="Wilson R.K."/>
        </authorList>
    </citation>
    <scope>NUCLEOTIDE SEQUENCE [LARGE SCALE GENOMIC DNA]</scope>
    <source>
        <strain>ATCC 700721 / MGH 78578</strain>
    </source>
</reference>